<reference key="1">
    <citation type="journal article" date="2005" name="Proc. Natl. Acad. Sci. U.S.A.">
        <title>Complete genome sequence of Vibrio fischeri: a symbiotic bacterium with pathogenic congeners.</title>
        <authorList>
            <person name="Ruby E.G."/>
            <person name="Urbanowski M."/>
            <person name="Campbell J."/>
            <person name="Dunn A."/>
            <person name="Faini M."/>
            <person name="Gunsalus R."/>
            <person name="Lostroh P."/>
            <person name="Lupp C."/>
            <person name="McCann J."/>
            <person name="Millikan D."/>
            <person name="Schaefer A."/>
            <person name="Stabb E."/>
            <person name="Stevens A."/>
            <person name="Visick K."/>
            <person name="Whistler C."/>
            <person name="Greenberg E.P."/>
        </authorList>
    </citation>
    <scope>NUCLEOTIDE SEQUENCE [LARGE SCALE GENOMIC DNA]</scope>
    <source>
        <strain>ATCC 700601 / ES114</strain>
    </source>
</reference>
<name>ZIPA_ALIF1</name>
<evidence type="ECO:0000255" key="1">
    <source>
        <dbReference type="HAMAP-Rule" id="MF_00509"/>
    </source>
</evidence>
<evidence type="ECO:0000256" key="2">
    <source>
        <dbReference type="SAM" id="MobiDB-lite"/>
    </source>
</evidence>
<evidence type="ECO:0000305" key="3"/>
<protein>
    <recommendedName>
        <fullName evidence="1">Cell division protein ZipA</fullName>
    </recommendedName>
</protein>
<gene>
    <name evidence="1" type="primary">zipA</name>
    <name type="ordered locus">VF_1891</name>
</gene>
<organism>
    <name type="scientific">Aliivibrio fischeri (strain ATCC 700601 / ES114)</name>
    <name type="common">Vibrio fischeri</name>
    <dbReference type="NCBI Taxonomy" id="312309"/>
    <lineage>
        <taxon>Bacteria</taxon>
        <taxon>Pseudomonadati</taxon>
        <taxon>Pseudomonadota</taxon>
        <taxon>Gammaproteobacteria</taxon>
        <taxon>Vibrionales</taxon>
        <taxon>Vibrionaceae</taxon>
        <taxon>Aliivibrio</taxon>
    </lineage>
</organism>
<proteinExistence type="inferred from homology"/>
<comment type="function">
    <text evidence="1">Essential cell division protein that stabilizes the FtsZ protofilaments by cross-linking them and that serves as a cytoplasmic membrane anchor for the Z ring. Also required for the recruitment to the septal ring of downstream cell division proteins.</text>
</comment>
<comment type="subunit">
    <text evidence="1">Interacts with FtsZ via their C-terminal domains.</text>
</comment>
<comment type="subcellular location">
    <subcellularLocation>
        <location evidence="1">Cell inner membrane</location>
        <topology evidence="1">Single-pass type I membrane protein</topology>
    </subcellularLocation>
    <text evidence="1">Localizes to the Z ring in an FtsZ-dependent manner.</text>
</comment>
<comment type="similarity">
    <text evidence="1">Belongs to the ZipA family.</text>
</comment>
<comment type="sequence caution" evidence="3">
    <conflict type="erroneous initiation">
        <sequence resource="EMBL-CDS" id="AAW86386"/>
    </conflict>
</comment>
<accession>Q5E3L0</accession>
<keyword id="KW-0131">Cell cycle</keyword>
<keyword id="KW-0132">Cell division</keyword>
<keyword id="KW-0997">Cell inner membrane</keyword>
<keyword id="KW-1003">Cell membrane</keyword>
<keyword id="KW-0472">Membrane</keyword>
<keyword id="KW-1185">Reference proteome</keyword>
<keyword id="KW-0812">Transmembrane</keyword>
<keyword id="KW-1133">Transmembrane helix</keyword>
<sequence length="333" mass="37173">MQELRLVLILVGALAIAALLFHGLWTSRKETSSKFGKKVDIDFDSDVDDEQAAPMRGFDQPKEDVVVQKERKEPAFAREEVPTSDDPLFEGTVSSESNKFTQQEKPTVQQAQPQPQPQPVVQQVQEPTVGRIEPEAKPVAAPVKREEPTISFSAIDDEVLTQPEPVQAKVDIPETSTYLEPEIIIEEPEPEPEPELEEDVIVINVHGMGSDRFSGNRLFNSLEQNGLVFGDMAIYHRHSDLSGAGKVLFSVANMVSPGHFQVPEGEEFSTPGISFFLPLPCYGDAEHNFKLMLQTAQMISSELGGNVLDEKRDMLTPNKIDEYKQRVKVFCRK</sequence>
<feature type="chain" id="PRO_0000237139" description="Cell division protein ZipA">
    <location>
        <begin position="1"/>
        <end position="333"/>
    </location>
</feature>
<feature type="topological domain" description="Periplasmic" evidence="1">
    <location>
        <begin position="1"/>
        <end position="5"/>
    </location>
</feature>
<feature type="transmembrane region" description="Helical" evidence="1">
    <location>
        <begin position="6"/>
        <end position="26"/>
    </location>
</feature>
<feature type="topological domain" description="Cytoplasmic" evidence="1">
    <location>
        <begin position="27"/>
        <end position="333"/>
    </location>
</feature>
<feature type="region of interest" description="Disordered" evidence="2">
    <location>
        <begin position="72"/>
        <end position="119"/>
    </location>
</feature>
<feature type="compositionally biased region" description="Basic and acidic residues" evidence="2">
    <location>
        <begin position="72"/>
        <end position="81"/>
    </location>
</feature>
<feature type="compositionally biased region" description="Polar residues" evidence="2">
    <location>
        <begin position="92"/>
        <end position="107"/>
    </location>
</feature>
<feature type="compositionally biased region" description="Low complexity" evidence="2">
    <location>
        <begin position="108"/>
        <end position="119"/>
    </location>
</feature>
<dbReference type="EMBL" id="CP000020">
    <property type="protein sequence ID" value="AAW86386.1"/>
    <property type="status" value="ALT_INIT"/>
    <property type="molecule type" value="Genomic_DNA"/>
</dbReference>
<dbReference type="RefSeq" id="WP_047863485.1">
    <property type="nucleotide sequence ID" value="NC_006840.2"/>
</dbReference>
<dbReference type="RefSeq" id="YP_205274.1">
    <property type="nucleotide sequence ID" value="NC_006840.2"/>
</dbReference>
<dbReference type="SMR" id="Q5E3L0"/>
<dbReference type="STRING" id="312309.VF_1891"/>
<dbReference type="EnsemblBacteria" id="AAW86386">
    <property type="protein sequence ID" value="AAW86386"/>
    <property type="gene ID" value="VF_1891"/>
</dbReference>
<dbReference type="GeneID" id="54164589"/>
<dbReference type="KEGG" id="vfi:VF_1891"/>
<dbReference type="PATRIC" id="fig|312309.11.peg.1919"/>
<dbReference type="eggNOG" id="COG3115">
    <property type="taxonomic scope" value="Bacteria"/>
</dbReference>
<dbReference type="HOGENOM" id="CLU_030174_1_0_6"/>
<dbReference type="OrthoDB" id="7054914at2"/>
<dbReference type="Proteomes" id="UP000000537">
    <property type="component" value="Chromosome I"/>
</dbReference>
<dbReference type="GO" id="GO:0032153">
    <property type="term" value="C:cell division site"/>
    <property type="evidence" value="ECO:0007669"/>
    <property type="project" value="UniProtKB-UniRule"/>
</dbReference>
<dbReference type="GO" id="GO:0005886">
    <property type="term" value="C:plasma membrane"/>
    <property type="evidence" value="ECO:0007669"/>
    <property type="project" value="UniProtKB-SubCell"/>
</dbReference>
<dbReference type="GO" id="GO:0000917">
    <property type="term" value="P:division septum assembly"/>
    <property type="evidence" value="ECO:0007669"/>
    <property type="project" value="TreeGrafter"/>
</dbReference>
<dbReference type="GO" id="GO:0043093">
    <property type="term" value="P:FtsZ-dependent cytokinesis"/>
    <property type="evidence" value="ECO:0007669"/>
    <property type="project" value="UniProtKB-UniRule"/>
</dbReference>
<dbReference type="Gene3D" id="3.30.1400.10">
    <property type="entry name" value="ZipA, C-terminal FtsZ-binding domain"/>
    <property type="match status" value="1"/>
</dbReference>
<dbReference type="HAMAP" id="MF_00509">
    <property type="entry name" value="ZipA"/>
    <property type="match status" value="1"/>
</dbReference>
<dbReference type="InterPro" id="IPR011919">
    <property type="entry name" value="Cell_div_ZipA"/>
</dbReference>
<dbReference type="InterPro" id="IPR007449">
    <property type="entry name" value="ZipA_FtsZ-bd_C"/>
</dbReference>
<dbReference type="InterPro" id="IPR036765">
    <property type="entry name" value="ZipA_FtsZ-bd_C_sf"/>
</dbReference>
<dbReference type="NCBIfam" id="TIGR02205">
    <property type="entry name" value="septum_zipA"/>
    <property type="match status" value="1"/>
</dbReference>
<dbReference type="PANTHER" id="PTHR38685">
    <property type="entry name" value="CELL DIVISION PROTEIN ZIPA"/>
    <property type="match status" value="1"/>
</dbReference>
<dbReference type="PANTHER" id="PTHR38685:SF1">
    <property type="entry name" value="CELL DIVISION PROTEIN ZIPA"/>
    <property type="match status" value="1"/>
</dbReference>
<dbReference type="Pfam" id="PF04354">
    <property type="entry name" value="ZipA_C"/>
    <property type="match status" value="1"/>
</dbReference>
<dbReference type="SMART" id="SM00771">
    <property type="entry name" value="ZipA_C"/>
    <property type="match status" value="1"/>
</dbReference>
<dbReference type="SUPFAM" id="SSF64383">
    <property type="entry name" value="Cell-division protein ZipA, C-terminal domain"/>
    <property type="match status" value="1"/>
</dbReference>